<accession>Q83HR7</accession>
<proteinExistence type="inferred from homology"/>
<reference key="1">
    <citation type="journal article" date="2003" name="Lancet">
        <title>Sequencing and analysis of the genome of the Whipple's disease bacterium Tropheryma whipplei.</title>
        <authorList>
            <person name="Bentley S.D."/>
            <person name="Maiwald M."/>
            <person name="Murphy L.D."/>
            <person name="Pallen M.J."/>
            <person name="Yeats C.A."/>
            <person name="Dover L.G."/>
            <person name="Norbertczak H.T."/>
            <person name="Besra G.S."/>
            <person name="Quail M.A."/>
            <person name="Harris D.E."/>
            <person name="von Herbay A."/>
            <person name="Goble A."/>
            <person name="Rutter S."/>
            <person name="Squares R."/>
            <person name="Squares S."/>
            <person name="Barrell B.G."/>
            <person name="Parkhill J."/>
            <person name="Relman D.A."/>
        </authorList>
    </citation>
    <scope>NUCLEOTIDE SEQUENCE [LARGE SCALE GENOMIC DNA]</scope>
    <source>
        <strain>TW08/27</strain>
    </source>
</reference>
<dbReference type="EC" id="2.5.1.-" evidence="1"/>
<dbReference type="EMBL" id="BX251411">
    <property type="protein sequence ID" value="CAD67109.1"/>
    <property type="molecule type" value="Genomic_DNA"/>
</dbReference>
<dbReference type="RefSeq" id="WP_011096389.1">
    <property type="nucleotide sequence ID" value="NC_004551.1"/>
</dbReference>
<dbReference type="SMR" id="Q83HR7"/>
<dbReference type="GeneID" id="67388218"/>
<dbReference type="KEGG" id="tws:TW440"/>
<dbReference type="HOGENOM" id="CLU_038505_2_0_11"/>
<dbReference type="GO" id="GO:0045547">
    <property type="term" value="F:ditrans,polycis-polyprenyl diphosphate synthase [(2E,6E)-farnesyl diphosphate specific] activity"/>
    <property type="evidence" value="ECO:0007669"/>
    <property type="project" value="TreeGrafter"/>
</dbReference>
<dbReference type="GO" id="GO:0000287">
    <property type="term" value="F:magnesium ion binding"/>
    <property type="evidence" value="ECO:0007669"/>
    <property type="project" value="UniProtKB-UniRule"/>
</dbReference>
<dbReference type="GO" id="GO:0016094">
    <property type="term" value="P:polyprenol biosynthetic process"/>
    <property type="evidence" value="ECO:0007669"/>
    <property type="project" value="TreeGrafter"/>
</dbReference>
<dbReference type="CDD" id="cd00475">
    <property type="entry name" value="Cis_IPPS"/>
    <property type="match status" value="1"/>
</dbReference>
<dbReference type="Gene3D" id="3.40.1180.10">
    <property type="entry name" value="Decaprenyl diphosphate synthase-like"/>
    <property type="match status" value="1"/>
</dbReference>
<dbReference type="HAMAP" id="MF_01139">
    <property type="entry name" value="ISPT"/>
    <property type="match status" value="1"/>
</dbReference>
<dbReference type="InterPro" id="IPR001441">
    <property type="entry name" value="UPP_synth-like"/>
</dbReference>
<dbReference type="InterPro" id="IPR018520">
    <property type="entry name" value="UPP_synth-like_CS"/>
</dbReference>
<dbReference type="InterPro" id="IPR036424">
    <property type="entry name" value="UPP_synth-like_sf"/>
</dbReference>
<dbReference type="NCBIfam" id="NF011403">
    <property type="entry name" value="PRK14828.1"/>
    <property type="match status" value="1"/>
</dbReference>
<dbReference type="NCBIfam" id="TIGR00055">
    <property type="entry name" value="uppS"/>
    <property type="match status" value="1"/>
</dbReference>
<dbReference type="PANTHER" id="PTHR10291:SF43">
    <property type="entry name" value="DEHYDRODOLICHYL DIPHOSPHATE SYNTHASE COMPLEX SUBUNIT DHDDS"/>
    <property type="match status" value="1"/>
</dbReference>
<dbReference type="PANTHER" id="PTHR10291">
    <property type="entry name" value="DEHYDRODOLICHYL DIPHOSPHATE SYNTHASE FAMILY MEMBER"/>
    <property type="match status" value="1"/>
</dbReference>
<dbReference type="Pfam" id="PF01255">
    <property type="entry name" value="Prenyltransf"/>
    <property type="match status" value="1"/>
</dbReference>
<dbReference type="SUPFAM" id="SSF64005">
    <property type="entry name" value="Undecaprenyl diphosphate synthase"/>
    <property type="match status" value="1"/>
</dbReference>
<dbReference type="PROSITE" id="PS01066">
    <property type="entry name" value="UPP_SYNTHASE"/>
    <property type="match status" value="1"/>
</dbReference>
<organism>
    <name type="scientific">Tropheryma whipplei (strain TW08/27)</name>
    <name type="common">Whipple's bacillus</name>
    <dbReference type="NCBI Taxonomy" id="218496"/>
    <lineage>
        <taxon>Bacteria</taxon>
        <taxon>Bacillati</taxon>
        <taxon>Actinomycetota</taxon>
        <taxon>Actinomycetes</taxon>
        <taxon>Micrococcales</taxon>
        <taxon>Tropherymataceae</taxon>
        <taxon>Tropheryma</taxon>
    </lineage>
</organism>
<evidence type="ECO:0000255" key="1">
    <source>
        <dbReference type="HAMAP-Rule" id="MF_01139"/>
    </source>
</evidence>
<protein>
    <recommendedName>
        <fullName evidence="1">Isoprenyl transferase 1</fullName>
        <ecNumber evidence="1">2.5.1.-</ecNumber>
    </recommendedName>
</protein>
<keyword id="KW-0460">Magnesium</keyword>
<keyword id="KW-0479">Metal-binding</keyword>
<keyword id="KW-0808">Transferase</keyword>
<gene>
    <name evidence="1" type="primary">uppS1</name>
    <name type="ordered locus">TW440</name>
</gene>
<comment type="function">
    <text evidence="1">Catalyzes the condensation of isopentenyl diphosphate (IPP) with allylic pyrophosphates generating different type of terpenoids.</text>
</comment>
<comment type="cofactor">
    <cofactor evidence="1">
        <name>Mg(2+)</name>
        <dbReference type="ChEBI" id="CHEBI:18420"/>
    </cofactor>
    <text evidence="1">Binds 2 magnesium ions per subunit.</text>
</comment>
<comment type="subunit">
    <text evidence="1">Homodimer.</text>
</comment>
<comment type="similarity">
    <text evidence="1">Belongs to the UPP synthase family.</text>
</comment>
<sequence length="258" mass="29283">MGGKMLRSVSELIYKVYARYLLGQINLNNLPGHVALIVDGNRRWARKEKRDRISDGHRAGAGKAVDFLHWCDELDINIVTLYLLSNDNLKNRNRQELNDLVQVICNLIAQVSKRWKVNHVGSCENLPELLGNSLEGVKSSTKTNRYSERSMTVNLAIGYSGRAEITEAVRKIVNTYPIGDLPEKITEEVISANLYTGGLSDPDLIIRTSGEQRLSDFMPWQSTHSEFYFLEALGPDLRKVDFLRAIRDFSIRRRSFGA</sequence>
<name>ISPT1_TROW8</name>
<feature type="chain" id="PRO_0000123707" description="Isoprenyl transferase 1">
    <location>
        <begin position="1"/>
        <end position="258"/>
    </location>
</feature>
<feature type="active site" evidence="1">
    <location>
        <position position="39"/>
    </location>
</feature>
<feature type="active site" description="Proton acceptor" evidence="1">
    <location>
        <position position="88"/>
    </location>
</feature>
<feature type="binding site" evidence="1">
    <location>
        <position position="39"/>
    </location>
    <ligand>
        <name>Mg(2+)</name>
        <dbReference type="ChEBI" id="CHEBI:18420"/>
    </ligand>
</feature>
<feature type="binding site" evidence="1">
    <location>
        <begin position="40"/>
        <end position="43"/>
    </location>
    <ligand>
        <name>substrate</name>
    </ligand>
</feature>
<feature type="binding site" evidence="1">
    <location>
        <position position="44"/>
    </location>
    <ligand>
        <name>substrate</name>
    </ligand>
</feature>
<feature type="binding site" evidence="1">
    <location>
        <position position="52"/>
    </location>
    <ligand>
        <name>substrate</name>
    </ligand>
</feature>
<feature type="binding site" evidence="1">
    <location>
        <position position="57"/>
    </location>
    <ligand>
        <name>substrate</name>
    </ligand>
</feature>
<feature type="binding site" evidence="1">
    <location>
        <begin position="85"/>
        <end position="87"/>
    </location>
    <ligand>
        <name>substrate</name>
    </ligand>
</feature>
<feature type="binding site" evidence="1">
    <location>
        <position position="92"/>
    </location>
    <ligand>
        <name>substrate</name>
    </ligand>
</feature>
<feature type="binding site" evidence="1">
    <location>
        <position position="207"/>
    </location>
    <ligand>
        <name>substrate</name>
    </ligand>
</feature>
<feature type="binding site" evidence="1">
    <location>
        <begin position="213"/>
        <end position="215"/>
    </location>
    <ligand>
        <name>substrate</name>
    </ligand>
</feature>
<feature type="binding site" evidence="1">
    <location>
        <position position="226"/>
    </location>
    <ligand>
        <name>Mg(2+)</name>
        <dbReference type="ChEBI" id="CHEBI:18420"/>
    </ligand>
</feature>